<organism>
    <name type="scientific">Danio rerio</name>
    <name type="common">Zebrafish</name>
    <name type="synonym">Brachydanio rerio</name>
    <dbReference type="NCBI Taxonomy" id="7955"/>
    <lineage>
        <taxon>Eukaryota</taxon>
        <taxon>Metazoa</taxon>
        <taxon>Chordata</taxon>
        <taxon>Craniata</taxon>
        <taxon>Vertebrata</taxon>
        <taxon>Euteleostomi</taxon>
        <taxon>Actinopterygii</taxon>
        <taxon>Neopterygii</taxon>
        <taxon>Teleostei</taxon>
        <taxon>Ostariophysi</taxon>
        <taxon>Cypriniformes</taxon>
        <taxon>Danionidae</taxon>
        <taxon>Danioninae</taxon>
        <taxon>Danio</taxon>
    </lineage>
</organism>
<protein>
    <recommendedName>
        <fullName>Leucine-rich repeat and fibronectin type III domain-containing protein 1</fullName>
    </recommendedName>
</protein>
<dbReference type="EMBL" id="CU468795">
    <property type="protein sequence ID" value="CAP08019.1"/>
    <property type="molecule type" value="mRNA"/>
</dbReference>
<dbReference type="EMBL" id="BC056798">
    <property type="protein sequence ID" value="AAH56798.1"/>
    <property type="molecule type" value="mRNA"/>
</dbReference>
<dbReference type="RefSeq" id="NP_956909.1">
    <property type="nucleotide sequence ID" value="NM_200615.1"/>
</dbReference>
<dbReference type="SMR" id="Q6PGX3"/>
<dbReference type="FunCoup" id="Q6PGX3">
    <property type="interactions" value="2"/>
</dbReference>
<dbReference type="STRING" id="7955.ENSDARP00000111665"/>
<dbReference type="GlyCosmos" id="Q6PGX3">
    <property type="glycosylation" value="6 sites, No reported glycans"/>
</dbReference>
<dbReference type="PaxDb" id="7955-ENSDARP00000111665"/>
<dbReference type="GeneID" id="393587"/>
<dbReference type="KEGG" id="dre:393587"/>
<dbReference type="AGR" id="ZFIN:ZDB-GENE-040426-1227"/>
<dbReference type="CTD" id="57622"/>
<dbReference type="ZFIN" id="ZDB-GENE-040426-1227">
    <property type="gene designation" value="lrfn1"/>
</dbReference>
<dbReference type="eggNOG" id="KOG0619">
    <property type="taxonomic scope" value="Eukaryota"/>
</dbReference>
<dbReference type="InParanoid" id="Q6PGX3"/>
<dbReference type="OrthoDB" id="1394818at2759"/>
<dbReference type="PhylomeDB" id="Q6PGX3"/>
<dbReference type="Reactome" id="R-DRE-8849932">
    <property type="pathway name" value="Synaptic adhesion-like molecules"/>
</dbReference>
<dbReference type="PRO" id="PR:Q6PGX3"/>
<dbReference type="Proteomes" id="UP000000437">
    <property type="component" value="Chromosome 15"/>
</dbReference>
<dbReference type="GO" id="GO:0016020">
    <property type="term" value="C:membrane"/>
    <property type="evidence" value="ECO:0007669"/>
    <property type="project" value="UniProtKB-SubCell"/>
</dbReference>
<dbReference type="GO" id="GO:0045202">
    <property type="term" value="C:synapse"/>
    <property type="evidence" value="ECO:0007669"/>
    <property type="project" value="UniProtKB-SubCell"/>
</dbReference>
<dbReference type="FunFam" id="2.60.40.10:FF:000091">
    <property type="entry name" value="Leucine-rich repeat and fibronectin type III domain-containing protein 1"/>
    <property type="match status" value="1"/>
</dbReference>
<dbReference type="FunFam" id="3.80.10.10:FF:000016">
    <property type="entry name" value="Leucine-rich repeat and fibronectin type III domain-containing protein 1"/>
    <property type="match status" value="1"/>
</dbReference>
<dbReference type="FunFam" id="3.80.10.10:FF:000019">
    <property type="entry name" value="leucine-rich repeat and fibronectin type III domain-containing protein 1"/>
    <property type="match status" value="1"/>
</dbReference>
<dbReference type="Gene3D" id="2.60.40.10">
    <property type="entry name" value="Immunoglobulins"/>
    <property type="match status" value="1"/>
</dbReference>
<dbReference type="Gene3D" id="3.80.10.10">
    <property type="entry name" value="Ribonuclease Inhibitor"/>
    <property type="match status" value="2"/>
</dbReference>
<dbReference type="InterPro" id="IPR000483">
    <property type="entry name" value="Cys-rich_flank_reg_C"/>
</dbReference>
<dbReference type="InterPro" id="IPR007110">
    <property type="entry name" value="Ig-like_dom"/>
</dbReference>
<dbReference type="InterPro" id="IPR036179">
    <property type="entry name" value="Ig-like_dom_sf"/>
</dbReference>
<dbReference type="InterPro" id="IPR013783">
    <property type="entry name" value="Ig-like_fold"/>
</dbReference>
<dbReference type="InterPro" id="IPR003599">
    <property type="entry name" value="Ig_sub"/>
</dbReference>
<dbReference type="InterPro" id="IPR003598">
    <property type="entry name" value="Ig_sub2"/>
</dbReference>
<dbReference type="InterPro" id="IPR001611">
    <property type="entry name" value="Leu-rich_rpt"/>
</dbReference>
<dbReference type="InterPro" id="IPR003591">
    <property type="entry name" value="Leu-rich_rpt_typical-subtyp"/>
</dbReference>
<dbReference type="InterPro" id="IPR050467">
    <property type="entry name" value="LRFN"/>
</dbReference>
<dbReference type="InterPro" id="IPR032675">
    <property type="entry name" value="LRR_dom_sf"/>
</dbReference>
<dbReference type="PANTHER" id="PTHR45842:SF7">
    <property type="entry name" value="LEUCINE-RICH REPEAT AND FIBRONECTIN TYPE III DOMAIN-CONTAINING PROTEIN 1"/>
    <property type="match status" value="1"/>
</dbReference>
<dbReference type="PANTHER" id="PTHR45842">
    <property type="entry name" value="SYNAPTIC ADHESION-LIKE MOLECULE SALM"/>
    <property type="match status" value="1"/>
</dbReference>
<dbReference type="Pfam" id="PF13927">
    <property type="entry name" value="Ig_3"/>
    <property type="match status" value="1"/>
</dbReference>
<dbReference type="Pfam" id="PF13855">
    <property type="entry name" value="LRR_8"/>
    <property type="match status" value="2"/>
</dbReference>
<dbReference type="SMART" id="SM00409">
    <property type="entry name" value="IG"/>
    <property type="match status" value="1"/>
</dbReference>
<dbReference type="SMART" id="SM00408">
    <property type="entry name" value="IGc2"/>
    <property type="match status" value="1"/>
</dbReference>
<dbReference type="SMART" id="SM00369">
    <property type="entry name" value="LRR_TYP"/>
    <property type="match status" value="6"/>
</dbReference>
<dbReference type="SMART" id="SM00082">
    <property type="entry name" value="LRRCT"/>
    <property type="match status" value="1"/>
</dbReference>
<dbReference type="SUPFAM" id="SSF48726">
    <property type="entry name" value="Immunoglobulin"/>
    <property type="match status" value="1"/>
</dbReference>
<dbReference type="SUPFAM" id="SSF52058">
    <property type="entry name" value="L domain-like"/>
    <property type="match status" value="1"/>
</dbReference>
<dbReference type="PROSITE" id="PS50835">
    <property type="entry name" value="IG_LIKE"/>
    <property type="match status" value="1"/>
</dbReference>
<dbReference type="PROSITE" id="PS51450">
    <property type="entry name" value="LRR"/>
    <property type="match status" value="6"/>
</dbReference>
<evidence type="ECO:0000250" key="1"/>
<evidence type="ECO:0000255" key="2"/>
<evidence type="ECO:0000255" key="3">
    <source>
        <dbReference type="PROSITE-ProRule" id="PRU00114"/>
    </source>
</evidence>
<evidence type="ECO:0000256" key="4">
    <source>
        <dbReference type="SAM" id="MobiDB-lite"/>
    </source>
</evidence>
<evidence type="ECO:0000303" key="5">
    <source>
    </source>
</evidence>
<evidence type="ECO:0000305" key="6"/>
<proteinExistence type="evidence at transcript level"/>
<comment type="function">
    <text evidence="1">Involved in the regulation of excitatory synapses.</text>
</comment>
<comment type="subcellular location">
    <subcellularLocation>
        <location evidence="1">Membrane</location>
        <topology evidence="1">Single-pass type I membrane protein</topology>
    </subcellularLocation>
    <subcellularLocation>
        <location evidence="1">Synapse</location>
    </subcellularLocation>
</comment>
<comment type="alternative products">
    <event type="alternative splicing"/>
    <isoform>
        <id>Q6PGX3-1</id>
        <name>1</name>
        <sequence type="displayed"/>
    </isoform>
    <isoform>
        <id>Q6PGX3-2</id>
        <name>2</name>
        <sequence type="described" ref="VSP_033620"/>
    </isoform>
</comment>
<comment type="similarity">
    <text evidence="6">Belongs to the LRFN family.</text>
</comment>
<sequence>MERLVFCVLVFGALAKAQLCPGRCICQTISPTLTLLCAKTGLLFVPPTVDRKTVELRLTDNFITAVRRKDFLNMTSLVHLTLSRNTISQIAPHAFMGLKSLRALHMDGNRLSVINSDQLKGLMNLRHLILGNNQIHHIEESSFDEFVATIEDLDLSYNNLRTLPWEAIARMTNINTLTLDHNLIDHIGVGTFTLLTKLVRLDMTSNRLQTLPPDTLFQHAQVLSEPKTSSSSRLTVSFGGNPLHCNCELLWLRRLTREDDLETCASPEHLMDKYFWSIQEEEFICEPPLITKHQVTKPYVMEGQGVTLKCKAMGDPDPAIHWRFPDGKLVHNNSRTILYDNGTLDILITTLKDSGAFNCVASNAAGIATAAVHVHMIPLPLLVNNTGHMREADPGLSDISTSSRSSSNDSKTHSKRVLVENLTAHSAVIHWPSERHIPGIRMYQIQYELCVLAVYDDGITSLTATRVVGCVHFHTLPETNQCRFVPSQFLGGTMIIIIGGIIVASVLVFIIILMIRYKAYSGGGGDTAKAKAGGDVSVHVHSQTNGSRSAATKQSEEPPESPAGKHCKALVLLKMVLPILHLLF</sequence>
<name>LRFN1_DANRE</name>
<keyword id="KW-0025">Alternative splicing</keyword>
<keyword id="KW-1015">Disulfide bond</keyword>
<keyword id="KW-0325">Glycoprotein</keyword>
<keyword id="KW-0393">Immunoglobulin domain</keyword>
<keyword id="KW-0433">Leucine-rich repeat</keyword>
<keyword id="KW-0472">Membrane</keyword>
<keyword id="KW-1185">Reference proteome</keyword>
<keyword id="KW-0677">Repeat</keyword>
<keyword id="KW-0732">Signal</keyword>
<keyword id="KW-0770">Synapse</keyword>
<keyword id="KW-0812">Transmembrane</keyword>
<keyword id="KW-1133">Transmembrane helix</keyword>
<reference key="1">
    <citation type="journal article" date="2008" name="Genome Res.">
        <title>Large-scale screening for novel low-affinity extracellular protein interactions.</title>
        <authorList>
            <person name="Bushell K.M."/>
            <person name="Soellner C."/>
            <person name="Schuster-Boeckler B."/>
            <person name="Bateman A."/>
            <person name="Wright G.J."/>
        </authorList>
    </citation>
    <scope>NUCLEOTIDE SEQUENCE [LARGE SCALE MRNA] (ISOFORM 2)</scope>
</reference>
<reference key="2">
    <citation type="submission" date="2003-08" db="EMBL/GenBank/DDBJ databases">
        <authorList>
            <consortium name="NIH - Zebrafish Gene Collection (ZGC) project"/>
        </authorList>
    </citation>
    <scope>NUCLEOTIDE SEQUENCE [LARGE SCALE MRNA] (ISOFORM 1)</scope>
</reference>
<accession>Q6PGX3</accession>
<accession>A8BBG4</accession>
<gene>
    <name type="primary">lrfn1</name>
    <name type="ORF">zgc:63670</name>
</gene>
<feature type="signal peptide" evidence="2">
    <location>
        <begin position="1"/>
        <end position="17"/>
    </location>
</feature>
<feature type="chain" id="PRO_0000334148" description="Leucine-rich repeat and fibronectin type III domain-containing protein 1">
    <location>
        <begin position="18"/>
        <end position="584"/>
    </location>
</feature>
<feature type="topological domain" description="Extracellular" evidence="2">
    <location>
        <begin position="18"/>
        <end position="494"/>
    </location>
</feature>
<feature type="transmembrane region" description="Helical" evidence="2">
    <location>
        <begin position="495"/>
        <end position="515"/>
    </location>
</feature>
<feature type="topological domain" description="Cytoplasmic" evidence="2">
    <location>
        <begin position="516"/>
        <end position="584"/>
    </location>
</feature>
<feature type="domain" description="LRRNT">
    <location>
        <begin position="18"/>
        <end position="51"/>
    </location>
</feature>
<feature type="repeat" description="LRR 1">
    <location>
        <begin position="52"/>
        <end position="73"/>
    </location>
</feature>
<feature type="repeat" description="LRR 2">
    <location>
        <begin position="76"/>
        <end position="97"/>
    </location>
</feature>
<feature type="repeat" description="LRR 3">
    <location>
        <begin position="100"/>
        <end position="121"/>
    </location>
</feature>
<feature type="repeat" description="LRR 4">
    <location>
        <begin position="124"/>
        <end position="145"/>
    </location>
</feature>
<feature type="repeat" description="LRR 5">
    <location>
        <begin position="149"/>
        <end position="170"/>
    </location>
</feature>
<feature type="repeat" description="LRR 6">
    <location>
        <begin position="173"/>
        <end position="194"/>
    </location>
</feature>
<feature type="repeat" description="LRR 7">
    <location>
        <begin position="197"/>
        <end position="218"/>
    </location>
</feature>
<feature type="domain" description="LRRCT">
    <location>
        <begin position="241"/>
        <end position="287"/>
    </location>
</feature>
<feature type="domain" description="Ig-like">
    <location>
        <begin position="288"/>
        <end position="375"/>
    </location>
</feature>
<feature type="region of interest" description="Disordered" evidence="4">
    <location>
        <begin position="393"/>
        <end position="414"/>
    </location>
</feature>
<feature type="region of interest" description="Disordered" evidence="4">
    <location>
        <begin position="539"/>
        <end position="564"/>
    </location>
</feature>
<feature type="compositionally biased region" description="Low complexity" evidence="4">
    <location>
        <begin position="397"/>
        <end position="409"/>
    </location>
</feature>
<feature type="compositionally biased region" description="Polar residues" evidence="4">
    <location>
        <begin position="540"/>
        <end position="553"/>
    </location>
</feature>
<feature type="glycosylation site" description="N-linked (GlcNAc...) asparagine" evidence="2">
    <location>
        <position position="73"/>
    </location>
</feature>
<feature type="glycosylation site" description="N-linked (GlcNAc...) asparagine" evidence="2">
    <location>
        <position position="332"/>
    </location>
</feature>
<feature type="glycosylation site" description="N-linked (GlcNAc...) asparagine" evidence="2">
    <location>
        <position position="341"/>
    </location>
</feature>
<feature type="glycosylation site" description="N-linked (GlcNAc...) asparagine" evidence="2">
    <location>
        <position position="384"/>
    </location>
</feature>
<feature type="glycosylation site" description="N-linked (GlcNAc...) asparagine" evidence="2">
    <location>
        <position position="408"/>
    </location>
</feature>
<feature type="glycosylation site" description="N-linked (GlcNAc...) asparagine" evidence="2">
    <location>
        <position position="421"/>
    </location>
</feature>
<feature type="disulfide bond" evidence="3">
    <location>
        <begin position="310"/>
        <end position="359"/>
    </location>
</feature>
<feature type="splice variant" id="VSP_033620" description="In isoform 2." evidence="5">
    <original>Y</original>
    <variation>YNSTVDDTLVYRMIPSASKTFRINDLAAGREY</variation>
    <location>
        <position position="447"/>
    </location>
</feature>